<keyword id="KW-0903">Direct protein sequencing</keyword>
<proteinExistence type="evidence at protein level"/>
<comment type="induction">
    <text evidence="1 2">By phytoplasma infection.</text>
</comment>
<comment type="similarity">
    <text evidence="2">Belongs to the thaumatin family.</text>
</comment>
<protein>
    <recommendedName>
        <fullName>Thaumatin-like protein 1</fullName>
    </recommendedName>
    <alternativeName>
        <fullName>CTLP1</fullName>
    </alternativeName>
</protein>
<sequence length="43" mass="4208">AVFTVRNNXPYSIAPGVLTGGGAAASTTGFQLAPGXSXNVNVP</sequence>
<evidence type="ECO:0000269" key="1">
    <source>
    </source>
</evidence>
<evidence type="ECO:0000305" key="2"/>
<organism evidence="2">
    <name type="scientific">Glebionis coronaria</name>
    <name type="common">Crown daisy</name>
    <name type="synonym">Chrysanthemum coronarium</name>
    <dbReference type="NCBI Taxonomy" id="99038"/>
    <lineage>
        <taxon>Eukaryota</taxon>
        <taxon>Viridiplantae</taxon>
        <taxon>Streptophyta</taxon>
        <taxon>Embryophyta</taxon>
        <taxon>Tracheophyta</taxon>
        <taxon>Spermatophyta</taxon>
        <taxon>Magnoliopsida</taxon>
        <taxon>eudicotyledons</taxon>
        <taxon>Gunneridae</taxon>
        <taxon>Pentapetalae</taxon>
        <taxon>asterids</taxon>
        <taxon>campanulids</taxon>
        <taxon>Asterales</taxon>
        <taxon>Asteraceae</taxon>
        <taxon>Asteroideae</taxon>
        <taxon>Anthemideae</taxon>
        <taxon>Mediterranean clade</taxon>
        <taxon>Glebionidinae</taxon>
        <taxon>Glebionis</taxon>
    </lineage>
</organism>
<reference key="1">
    <citation type="journal article" date="2004" name="Acta Biochim. Biophys. Sin.">
        <title>Accumulation of pathogenesis-related type-5 like proteins in phytoplasma-infected garland chrysanthemum Chrysanthemum coronarium.</title>
        <authorList>
            <person name="Zhong B.X."/>
            <person name="Shen Y.W."/>
        </authorList>
    </citation>
    <scope>PROTEIN SEQUENCE</scope>
    <scope>INDUCTION</scope>
    <source>
        <strain>cv. Chu-you</strain>
    </source>
</reference>
<name>TLP1_GLECO</name>
<feature type="chain" id="PRO_0000096226" description="Thaumatin-like protein 1">
    <location>
        <begin position="1"/>
        <end position="43" status="greater than"/>
    </location>
</feature>
<feature type="non-terminal residue" evidence="2">
    <location>
        <position position="43"/>
    </location>
</feature>
<dbReference type="Gene3D" id="2.60.110.10">
    <property type="entry name" value="Thaumatin"/>
    <property type="match status" value="1"/>
</dbReference>
<dbReference type="InterPro" id="IPR037176">
    <property type="entry name" value="Osmotin/thaumatin-like_sf"/>
</dbReference>
<dbReference type="SUPFAM" id="SSF49870">
    <property type="entry name" value="Osmotin, thaumatin-like protein"/>
    <property type="match status" value="1"/>
</dbReference>
<accession>P81954</accession>